<keyword id="KW-0007">Acetylation</keyword>
<keyword id="KW-1017">Isopeptide bond</keyword>
<keyword id="KW-0597">Phosphoprotein</keyword>
<keyword id="KW-1185">Reference proteome</keyword>
<keyword id="KW-0832">Ubl conjugation</keyword>
<evidence type="ECO:0000250" key="1">
    <source>
        <dbReference type="UniProtKB" id="Q8IXQ4"/>
    </source>
</evidence>
<evidence type="ECO:0000256" key="2">
    <source>
        <dbReference type="SAM" id="MobiDB-lite"/>
    </source>
</evidence>
<gene>
    <name type="primary">GPALPP1</name>
</gene>
<organism>
    <name type="scientific">Pongo abelii</name>
    <name type="common">Sumatran orangutan</name>
    <name type="synonym">Pongo pygmaeus abelii</name>
    <dbReference type="NCBI Taxonomy" id="9601"/>
    <lineage>
        <taxon>Eukaryota</taxon>
        <taxon>Metazoa</taxon>
        <taxon>Chordata</taxon>
        <taxon>Craniata</taxon>
        <taxon>Vertebrata</taxon>
        <taxon>Euteleostomi</taxon>
        <taxon>Mammalia</taxon>
        <taxon>Eutheria</taxon>
        <taxon>Euarchontoglires</taxon>
        <taxon>Primates</taxon>
        <taxon>Haplorrhini</taxon>
        <taxon>Catarrhini</taxon>
        <taxon>Hominidae</taxon>
        <taxon>Pongo</taxon>
    </lineage>
</organism>
<protein>
    <recommendedName>
        <fullName>GPALPP motifs-containing protein 1</fullName>
    </recommendedName>
</protein>
<sequence>MARDLIGPALPPGFKARGTAEDEERDPSPGPALPPNYKSSSSDSSDSDEDSSSLYEEGNQESEEDDTGPTARKQRKNQDDDNDDDDDDDDDDGFFGPALPPGFKKQDDSPPRPIIGPALPPGFIKSTQKSDKGRDDPGQQETDSSEDEDIIGPMPAKGPVNYNVTTEFEKRAQRMKEKLTKGDDDSSKPIVRESWMTELPAEMKDFGLGPRTFKRRADDTSGDRSVWTDTPADRERKAKETQEARKSSSKKDEEHILSGRDKRLAEQVSSYNESKRSESLMDIHHKKLKSKAAEDKNKPQERIPFDRDKDLKVNRFDEAQKKALIKKSRELNTRFSHGKGNMFL</sequence>
<name>GPAM1_PONAB</name>
<feature type="initiator methionine" description="Removed" evidence="1">
    <location>
        <position position="1"/>
    </location>
</feature>
<feature type="chain" id="PRO_0000293716" description="GPALPP motifs-containing protein 1">
    <location>
        <begin position="2"/>
        <end position="344"/>
    </location>
</feature>
<feature type="region of interest" description="Disordered" evidence="2">
    <location>
        <begin position="1"/>
        <end position="309"/>
    </location>
</feature>
<feature type="short sequence motif" description="GPALPP motif 1">
    <location>
        <begin position="7"/>
        <end position="12"/>
    </location>
</feature>
<feature type="short sequence motif" description="GPALPP motif 2">
    <location>
        <begin position="30"/>
        <end position="35"/>
    </location>
</feature>
<feature type="short sequence motif" description="GPALPP motif 3">
    <location>
        <begin position="96"/>
        <end position="101"/>
    </location>
</feature>
<feature type="short sequence motif" description="GPALPP motif 4">
    <location>
        <begin position="116"/>
        <end position="121"/>
    </location>
</feature>
<feature type="compositionally biased region" description="Acidic residues" evidence="2">
    <location>
        <begin position="58"/>
        <end position="67"/>
    </location>
</feature>
<feature type="compositionally biased region" description="Acidic residues" evidence="2">
    <location>
        <begin position="80"/>
        <end position="93"/>
    </location>
</feature>
<feature type="compositionally biased region" description="Pro residues" evidence="2">
    <location>
        <begin position="111"/>
        <end position="120"/>
    </location>
</feature>
<feature type="compositionally biased region" description="Basic and acidic residues" evidence="2">
    <location>
        <begin position="128"/>
        <end position="137"/>
    </location>
</feature>
<feature type="compositionally biased region" description="Basic and acidic residues" evidence="2">
    <location>
        <begin position="167"/>
        <end position="191"/>
    </location>
</feature>
<feature type="compositionally biased region" description="Basic and acidic residues" evidence="2">
    <location>
        <begin position="231"/>
        <end position="265"/>
    </location>
</feature>
<feature type="compositionally biased region" description="Basic and acidic residues" evidence="2">
    <location>
        <begin position="273"/>
        <end position="283"/>
    </location>
</feature>
<feature type="compositionally biased region" description="Basic and acidic residues" evidence="2">
    <location>
        <begin position="291"/>
        <end position="309"/>
    </location>
</feature>
<feature type="modified residue" description="N-acetylalanine" evidence="1">
    <location>
        <position position="2"/>
    </location>
</feature>
<feature type="modified residue" description="Phosphoserine" evidence="1">
    <location>
        <position position="28"/>
    </location>
</feature>
<feature type="modified residue" description="Phosphoserine" evidence="1">
    <location>
        <position position="109"/>
    </location>
</feature>
<feature type="modified residue" description="Phosphothreonine" evidence="1">
    <location>
        <position position="142"/>
    </location>
</feature>
<feature type="modified residue" description="Phosphoserine" evidence="1">
    <location>
        <position position="144"/>
    </location>
</feature>
<feature type="modified residue" description="Phosphoserine" evidence="1">
    <location>
        <position position="145"/>
    </location>
</feature>
<feature type="cross-link" description="Glycyl lysine isopeptide (Lys-Gly) (interchain with G-Cter in SUMO2)" evidence="1">
    <location>
        <position position="275"/>
    </location>
</feature>
<feature type="cross-link" description="Glycyl lysine isopeptide (Lys-Gly) (interchain with G-Cter in SUMO2)" evidence="1">
    <location>
        <position position="312"/>
    </location>
</feature>
<reference key="1">
    <citation type="submission" date="2004-11" db="EMBL/GenBank/DDBJ databases">
        <authorList>
            <consortium name="The German cDNA consortium"/>
        </authorList>
    </citation>
    <scope>NUCLEOTIDE SEQUENCE [LARGE SCALE MRNA]</scope>
    <source>
        <tissue>Kidney</tissue>
    </source>
</reference>
<dbReference type="EMBL" id="CR859891">
    <property type="protein sequence ID" value="CAH92047.1"/>
    <property type="molecule type" value="mRNA"/>
</dbReference>
<dbReference type="RefSeq" id="NP_001126190.1">
    <property type="nucleotide sequence ID" value="NM_001132718.1"/>
</dbReference>
<dbReference type="SMR" id="Q5R863"/>
<dbReference type="GeneID" id="100173155"/>
<dbReference type="KEGG" id="pon:100173155"/>
<dbReference type="CTD" id="55425"/>
<dbReference type="eggNOG" id="KOG4188">
    <property type="taxonomic scope" value="Eukaryota"/>
</dbReference>
<dbReference type="InParanoid" id="Q5R863"/>
<dbReference type="OrthoDB" id="73491at2759"/>
<dbReference type="Proteomes" id="UP000001595">
    <property type="component" value="Unplaced"/>
</dbReference>
<dbReference type="InterPro" id="IPR022226">
    <property type="entry name" value="DUF3752"/>
</dbReference>
<dbReference type="InterPro" id="IPR046331">
    <property type="entry name" value="GPAM1-like"/>
</dbReference>
<dbReference type="PANTHER" id="PTHR46370">
    <property type="entry name" value="GPALPP MOTIFS-CONTAINING PROTEIN 1"/>
    <property type="match status" value="1"/>
</dbReference>
<dbReference type="PANTHER" id="PTHR46370:SF1">
    <property type="entry name" value="GPALPP MOTIFS-CONTAINING PROTEIN 1"/>
    <property type="match status" value="1"/>
</dbReference>
<dbReference type="Pfam" id="PF12572">
    <property type="entry name" value="DUF3752"/>
    <property type="match status" value="1"/>
</dbReference>
<accession>Q5R863</accession>
<proteinExistence type="evidence at transcript level"/>